<reference key="1">
    <citation type="journal article" date="2013" name="Proc. Natl. Acad. Sci. U.S.A.">
        <title>Polynucleobacter necessarius, a model for genome reduction in both free-living and symbiotic bacteria.</title>
        <authorList>
            <person name="Boscaro V."/>
            <person name="Felletti M."/>
            <person name="Vannini C."/>
            <person name="Ackerman M.S."/>
            <person name="Chain P.S."/>
            <person name="Malfatti S."/>
            <person name="Vergez L.M."/>
            <person name="Shin M."/>
            <person name="Doak T.G."/>
            <person name="Lynch M."/>
            <person name="Petroni G."/>
        </authorList>
    </citation>
    <scope>NUCLEOTIDE SEQUENCE [LARGE SCALE GENOMIC DNA]</scope>
    <source>
        <strain>STIR1</strain>
    </source>
</reference>
<protein>
    <recommendedName>
        <fullName evidence="1">Adenine phosphoribosyltransferase</fullName>
        <shortName evidence="1">APRT</shortName>
        <ecNumber evidence="1">2.4.2.7</ecNumber>
    </recommendedName>
</protein>
<accession>B1XUX7</accession>
<dbReference type="EC" id="2.4.2.7" evidence="1"/>
<dbReference type="EMBL" id="CP001010">
    <property type="protein sequence ID" value="ACB44154.1"/>
    <property type="molecule type" value="Genomic_DNA"/>
</dbReference>
<dbReference type="SMR" id="B1XUX7"/>
<dbReference type="STRING" id="452638.Pnec_0968"/>
<dbReference type="KEGG" id="pne:Pnec_0968"/>
<dbReference type="eggNOG" id="COG0503">
    <property type="taxonomic scope" value="Bacteria"/>
</dbReference>
<dbReference type="HOGENOM" id="CLU_063339_3_3_4"/>
<dbReference type="OrthoDB" id="9803963at2"/>
<dbReference type="UniPathway" id="UPA00588">
    <property type="reaction ID" value="UER00646"/>
</dbReference>
<dbReference type="GO" id="GO:0005737">
    <property type="term" value="C:cytoplasm"/>
    <property type="evidence" value="ECO:0007669"/>
    <property type="project" value="UniProtKB-SubCell"/>
</dbReference>
<dbReference type="GO" id="GO:0002055">
    <property type="term" value="F:adenine binding"/>
    <property type="evidence" value="ECO:0007669"/>
    <property type="project" value="TreeGrafter"/>
</dbReference>
<dbReference type="GO" id="GO:0003999">
    <property type="term" value="F:adenine phosphoribosyltransferase activity"/>
    <property type="evidence" value="ECO:0007669"/>
    <property type="project" value="UniProtKB-UniRule"/>
</dbReference>
<dbReference type="GO" id="GO:0016208">
    <property type="term" value="F:AMP binding"/>
    <property type="evidence" value="ECO:0007669"/>
    <property type="project" value="TreeGrafter"/>
</dbReference>
<dbReference type="GO" id="GO:0006168">
    <property type="term" value="P:adenine salvage"/>
    <property type="evidence" value="ECO:0007669"/>
    <property type="project" value="InterPro"/>
</dbReference>
<dbReference type="GO" id="GO:0044209">
    <property type="term" value="P:AMP salvage"/>
    <property type="evidence" value="ECO:0007669"/>
    <property type="project" value="UniProtKB-UniRule"/>
</dbReference>
<dbReference type="GO" id="GO:0006166">
    <property type="term" value="P:purine ribonucleoside salvage"/>
    <property type="evidence" value="ECO:0007669"/>
    <property type="project" value="UniProtKB-KW"/>
</dbReference>
<dbReference type="CDD" id="cd06223">
    <property type="entry name" value="PRTases_typeI"/>
    <property type="match status" value="1"/>
</dbReference>
<dbReference type="FunFam" id="3.40.50.2020:FF:000004">
    <property type="entry name" value="Adenine phosphoribosyltransferase"/>
    <property type="match status" value="1"/>
</dbReference>
<dbReference type="Gene3D" id="3.40.50.2020">
    <property type="match status" value="1"/>
</dbReference>
<dbReference type="HAMAP" id="MF_00004">
    <property type="entry name" value="Aden_phosphoribosyltr"/>
    <property type="match status" value="1"/>
</dbReference>
<dbReference type="InterPro" id="IPR005764">
    <property type="entry name" value="Ade_phspho_trans"/>
</dbReference>
<dbReference type="InterPro" id="IPR000836">
    <property type="entry name" value="PRibTrfase_dom"/>
</dbReference>
<dbReference type="InterPro" id="IPR029057">
    <property type="entry name" value="PRTase-like"/>
</dbReference>
<dbReference type="InterPro" id="IPR050054">
    <property type="entry name" value="UPRTase/APRTase"/>
</dbReference>
<dbReference type="NCBIfam" id="NF002636">
    <property type="entry name" value="PRK02304.1-5"/>
    <property type="match status" value="1"/>
</dbReference>
<dbReference type="PANTHER" id="PTHR32315">
    <property type="entry name" value="ADENINE PHOSPHORIBOSYLTRANSFERASE"/>
    <property type="match status" value="1"/>
</dbReference>
<dbReference type="PANTHER" id="PTHR32315:SF3">
    <property type="entry name" value="ADENINE PHOSPHORIBOSYLTRANSFERASE"/>
    <property type="match status" value="1"/>
</dbReference>
<dbReference type="Pfam" id="PF00156">
    <property type="entry name" value="Pribosyltran"/>
    <property type="match status" value="1"/>
</dbReference>
<dbReference type="SUPFAM" id="SSF53271">
    <property type="entry name" value="PRTase-like"/>
    <property type="match status" value="1"/>
</dbReference>
<evidence type="ECO:0000255" key="1">
    <source>
        <dbReference type="HAMAP-Rule" id="MF_00004"/>
    </source>
</evidence>
<sequence length="172" mass="18822">MNLLDYLPGVPDFPKPGVLFRDISPLLANPIAFKEAIHQLNEVAKQFDYTHILGIESRGFIFGSALAHFAHKGLALARKPNKLPLATHREAYGLEYGIDSLEIQQSTLPNDAKILLLDDVLATDGTLIAADKLIRSAGFEVIGAITLLEIGFLNGKQLLEQNGIRHQSVLKS</sequence>
<feature type="chain" id="PRO_1000088990" description="Adenine phosphoribosyltransferase">
    <location>
        <begin position="1"/>
        <end position="172"/>
    </location>
</feature>
<proteinExistence type="inferred from homology"/>
<gene>
    <name evidence="1" type="primary">apt</name>
    <name type="ordered locus">Pnec_0968</name>
</gene>
<organism>
    <name type="scientific">Polynucleobacter necessarius subsp. necessarius (strain STIR1)</name>
    <dbReference type="NCBI Taxonomy" id="452638"/>
    <lineage>
        <taxon>Bacteria</taxon>
        <taxon>Pseudomonadati</taxon>
        <taxon>Pseudomonadota</taxon>
        <taxon>Betaproteobacteria</taxon>
        <taxon>Burkholderiales</taxon>
        <taxon>Burkholderiaceae</taxon>
        <taxon>Polynucleobacter</taxon>
    </lineage>
</organism>
<keyword id="KW-0963">Cytoplasm</keyword>
<keyword id="KW-0328">Glycosyltransferase</keyword>
<keyword id="KW-0660">Purine salvage</keyword>
<keyword id="KW-0808">Transferase</keyword>
<comment type="function">
    <text evidence="1">Catalyzes a salvage reaction resulting in the formation of AMP, that is energically less costly than de novo synthesis.</text>
</comment>
<comment type="catalytic activity">
    <reaction evidence="1">
        <text>AMP + diphosphate = 5-phospho-alpha-D-ribose 1-diphosphate + adenine</text>
        <dbReference type="Rhea" id="RHEA:16609"/>
        <dbReference type="ChEBI" id="CHEBI:16708"/>
        <dbReference type="ChEBI" id="CHEBI:33019"/>
        <dbReference type="ChEBI" id="CHEBI:58017"/>
        <dbReference type="ChEBI" id="CHEBI:456215"/>
        <dbReference type="EC" id="2.4.2.7"/>
    </reaction>
</comment>
<comment type="pathway">
    <text evidence="1">Purine metabolism; AMP biosynthesis via salvage pathway; AMP from adenine: step 1/1.</text>
</comment>
<comment type="subunit">
    <text evidence="1">Homodimer.</text>
</comment>
<comment type="subcellular location">
    <subcellularLocation>
        <location evidence="1">Cytoplasm</location>
    </subcellularLocation>
</comment>
<comment type="similarity">
    <text evidence="1">Belongs to the purine/pyrimidine phosphoribosyltransferase family.</text>
</comment>
<name>APT_POLNS</name>